<organism>
    <name type="scientific">Drosophila melanogaster</name>
    <name type="common">Fruit fly</name>
    <dbReference type="NCBI Taxonomy" id="7227"/>
    <lineage>
        <taxon>Eukaryota</taxon>
        <taxon>Metazoa</taxon>
        <taxon>Ecdysozoa</taxon>
        <taxon>Arthropoda</taxon>
        <taxon>Hexapoda</taxon>
        <taxon>Insecta</taxon>
        <taxon>Pterygota</taxon>
        <taxon>Neoptera</taxon>
        <taxon>Endopterygota</taxon>
        <taxon>Diptera</taxon>
        <taxon>Brachycera</taxon>
        <taxon>Muscomorpha</taxon>
        <taxon>Ephydroidea</taxon>
        <taxon>Drosophilidae</taxon>
        <taxon>Drosophila</taxon>
        <taxon>Sophophora</taxon>
    </lineage>
</organism>
<gene>
    <name type="primary">Dscam2</name>
    <name type="ORF">CG42256</name>
</gene>
<dbReference type="EMBL" id="AE014296">
    <property type="protein sequence ID" value="AAF50600.3"/>
    <property type="molecule type" value="Genomic_DNA"/>
</dbReference>
<dbReference type="EMBL" id="AE014296">
    <property type="protein sequence ID" value="AAF50601.3"/>
    <property type="molecule type" value="Genomic_DNA"/>
</dbReference>
<dbReference type="EMBL" id="AE014296">
    <property type="protein sequence ID" value="AAF50602.3"/>
    <property type="molecule type" value="Genomic_DNA"/>
</dbReference>
<dbReference type="EMBL" id="AE014296">
    <property type="protein sequence ID" value="ABI31239.2"/>
    <property type="molecule type" value="Genomic_DNA"/>
</dbReference>
<dbReference type="EMBL" id="AE014296">
    <property type="protein sequence ID" value="ACL83251.1"/>
    <property type="molecule type" value="Genomic_DNA"/>
</dbReference>
<dbReference type="EMBL" id="AE014296">
    <property type="protein sequence ID" value="ACL83252.1"/>
    <property type="molecule type" value="Genomic_DNA"/>
</dbReference>
<dbReference type="EMBL" id="AE014296">
    <property type="protein sequence ID" value="ACL83253.1"/>
    <property type="molecule type" value="Genomic_DNA"/>
</dbReference>
<dbReference type="EMBL" id="AY118274">
    <property type="protein sequence ID" value="AAM48303.1"/>
    <property type="status" value="ALT_SEQ"/>
    <property type="molecule type" value="mRNA"/>
</dbReference>
<dbReference type="RefSeq" id="NP_001036588.2">
    <molecule id="Q9VS29-6"/>
    <property type="nucleotide sequence ID" value="NM_001043123.3"/>
</dbReference>
<dbReference type="RefSeq" id="NP_001137896.1">
    <molecule id="Q9VS29-7"/>
    <property type="nucleotide sequence ID" value="NM_001144424.2"/>
</dbReference>
<dbReference type="RefSeq" id="NP_001137897.1">
    <molecule id="Q9VS29-2"/>
    <property type="nucleotide sequence ID" value="NM_001144425.2"/>
</dbReference>
<dbReference type="RefSeq" id="NP_001137898.1">
    <molecule id="Q9VS29-3"/>
    <property type="nucleotide sequence ID" value="NM_001144426.2"/>
</dbReference>
<dbReference type="RefSeq" id="NP_729223.2">
    <molecule id="Q9VS29-5"/>
    <property type="nucleotide sequence ID" value="NM_168194.4"/>
</dbReference>
<dbReference type="RefSeq" id="NP_729224.2">
    <molecule id="Q9VS29-4"/>
    <property type="nucleotide sequence ID" value="NM_168195.3"/>
</dbReference>
<dbReference type="RefSeq" id="NP_729225.2">
    <molecule id="Q9VS29-1"/>
    <property type="nucleotide sequence ID" value="NM_168196.4"/>
</dbReference>
<dbReference type="SMR" id="Q9VS29"/>
<dbReference type="BioGRID" id="64233">
    <property type="interactions" value="2"/>
</dbReference>
<dbReference type="FunCoup" id="Q9VS29">
    <property type="interactions" value="191"/>
</dbReference>
<dbReference type="STRING" id="7227.FBpp0303369"/>
<dbReference type="GlyGen" id="Q9VS29">
    <property type="glycosylation" value="2 sites"/>
</dbReference>
<dbReference type="PaxDb" id="7227-FBpp0288826"/>
<dbReference type="EnsemblMetazoa" id="FBtr0299546">
    <molecule id="Q9VS29-2"/>
    <property type="protein sequence ID" value="FBpp0288821"/>
    <property type="gene ID" value="FBgn0265296"/>
</dbReference>
<dbReference type="EnsemblMetazoa" id="FBtr0299547">
    <molecule id="Q9VS29-3"/>
    <property type="protein sequence ID" value="FBpp0288822"/>
    <property type="gene ID" value="FBgn0265296"/>
</dbReference>
<dbReference type="EnsemblMetazoa" id="FBtr0299548">
    <molecule id="Q9VS29-4"/>
    <property type="protein sequence ID" value="FBpp0288823"/>
    <property type="gene ID" value="FBgn0265296"/>
</dbReference>
<dbReference type="EnsemblMetazoa" id="FBtr0299549">
    <molecule id="Q9VS29-5"/>
    <property type="protein sequence ID" value="FBpp0288824"/>
    <property type="gene ID" value="FBgn0265296"/>
</dbReference>
<dbReference type="EnsemblMetazoa" id="FBtr0299550">
    <molecule id="Q9VS29-6"/>
    <property type="protein sequence ID" value="FBpp0288825"/>
    <property type="gene ID" value="FBgn0265296"/>
</dbReference>
<dbReference type="EnsemblMetazoa" id="FBtr0299551">
    <molecule id="Q9VS29-1"/>
    <property type="protein sequence ID" value="FBpp0288826"/>
    <property type="gene ID" value="FBgn0265296"/>
</dbReference>
<dbReference type="EnsemblMetazoa" id="FBtr0299552">
    <molecule id="Q9VS29-7"/>
    <property type="protein sequence ID" value="FBpp0288827"/>
    <property type="gene ID" value="FBgn0265296"/>
</dbReference>
<dbReference type="GeneID" id="38788"/>
<dbReference type="KEGG" id="dme:Dmel_CG42256"/>
<dbReference type="UCSC" id="CG42256-RE">
    <property type="organism name" value="d. melanogaster"/>
</dbReference>
<dbReference type="AGR" id="FB:FBgn0265296"/>
<dbReference type="CTD" id="38788"/>
<dbReference type="FlyBase" id="FBgn0265296">
    <property type="gene designation" value="Dscam2"/>
</dbReference>
<dbReference type="VEuPathDB" id="VectorBase:FBgn0265296"/>
<dbReference type="eggNOG" id="KOG3510">
    <property type="taxonomic scope" value="Eukaryota"/>
</dbReference>
<dbReference type="InParanoid" id="Q9VS29"/>
<dbReference type="OrthoDB" id="5969272at2759"/>
<dbReference type="PhylomeDB" id="Q9VS29"/>
<dbReference type="Reactome" id="R-DME-376172">
    <property type="pathway name" value="DSCAM interactions"/>
</dbReference>
<dbReference type="BioGRID-ORCS" id="38788">
    <property type="hits" value="0 hits in 3 CRISPR screens"/>
</dbReference>
<dbReference type="ChiTaRS" id="Dscam2">
    <property type="organism name" value="fly"/>
</dbReference>
<dbReference type="GenomeRNAi" id="38788"/>
<dbReference type="PRO" id="PR:Q9VS29"/>
<dbReference type="Proteomes" id="UP000000803">
    <property type="component" value="Chromosome 3L"/>
</dbReference>
<dbReference type="Bgee" id="FBgn0265296">
    <property type="expression patterns" value="Expressed in transmedullary Y neuron TmY14 in insect head and 163 other cell types or tissues"/>
</dbReference>
<dbReference type="ExpressionAtlas" id="Q9VS29">
    <property type="expression patterns" value="baseline and differential"/>
</dbReference>
<dbReference type="GO" id="GO:0030424">
    <property type="term" value="C:axon"/>
    <property type="evidence" value="ECO:0000318"/>
    <property type="project" value="GO_Central"/>
</dbReference>
<dbReference type="GO" id="GO:0005886">
    <property type="term" value="C:plasma membrane"/>
    <property type="evidence" value="ECO:0000255"/>
    <property type="project" value="FlyBase"/>
</dbReference>
<dbReference type="GO" id="GO:0098632">
    <property type="term" value="F:cell-cell adhesion mediator activity"/>
    <property type="evidence" value="ECO:0000318"/>
    <property type="project" value="GO_Central"/>
</dbReference>
<dbReference type="GO" id="GO:0042802">
    <property type="term" value="F:identical protein binding"/>
    <property type="evidence" value="ECO:0000353"/>
    <property type="project" value="FlyBase"/>
</dbReference>
<dbReference type="GO" id="GO:0007411">
    <property type="term" value="P:axon guidance"/>
    <property type="evidence" value="ECO:0000318"/>
    <property type="project" value="GO_Central"/>
</dbReference>
<dbReference type="GO" id="GO:0007417">
    <property type="term" value="P:central nervous system development"/>
    <property type="evidence" value="ECO:0000318"/>
    <property type="project" value="GO_Central"/>
</dbReference>
<dbReference type="GO" id="GO:0070593">
    <property type="term" value="P:dendrite self-avoidance"/>
    <property type="evidence" value="ECO:0000318"/>
    <property type="project" value="GO_Central"/>
</dbReference>
<dbReference type="GO" id="GO:0007156">
    <property type="term" value="P:homophilic cell adhesion via plasma membrane adhesion molecules"/>
    <property type="evidence" value="ECO:0000314"/>
    <property type="project" value="FlyBase"/>
</dbReference>
<dbReference type="GO" id="GO:0048812">
    <property type="term" value="P:neuron projection morphogenesis"/>
    <property type="evidence" value="ECO:0000315"/>
    <property type="project" value="FlyBase"/>
</dbReference>
<dbReference type="CDD" id="cd00063">
    <property type="entry name" value="FN3"/>
    <property type="match status" value="6"/>
</dbReference>
<dbReference type="CDD" id="cd00096">
    <property type="entry name" value="Ig"/>
    <property type="match status" value="3"/>
</dbReference>
<dbReference type="CDD" id="cd20957">
    <property type="entry name" value="IgC2_3_Dscam"/>
    <property type="match status" value="1"/>
</dbReference>
<dbReference type="CDD" id="cd20956">
    <property type="entry name" value="IgI_4_Dscam"/>
    <property type="match status" value="1"/>
</dbReference>
<dbReference type="CDD" id="cd20958">
    <property type="entry name" value="IgI_5_Dscam"/>
    <property type="match status" value="1"/>
</dbReference>
<dbReference type="CDD" id="cd20954">
    <property type="entry name" value="IgI_7_Dscam"/>
    <property type="match status" value="1"/>
</dbReference>
<dbReference type="FunFam" id="2.60.40.10:FF:002485">
    <property type="entry name" value="AGAP004902-PA-like protein"/>
    <property type="match status" value="1"/>
</dbReference>
<dbReference type="FunFam" id="2.60.40.10:FF:000333">
    <property type="entry name" value="Down syndrome cell adhesion molecule"/>
    <property type="match status" value="1"/>
</dbReference>
<dbReference type="FunFam" id="2.60.40.10:FF:001823">
    <property type="entry name" value="Down syndrome cell adhesion molecule 2, isoform Q"/>
    <property type="match status" value="1"/>
</dbReference>
<dbReference type="FunFam" id="2.60.40.10:FF:000017">
    <property type="entry name" value="Down syndrome cell adhesion molecule b"/>
    <property type="match status" value="1"/>
</dbReference>
<dbReference type="FunFam" id="2.60.40.10:FF:000104">
    <property type="entry name" value="Down syndrome cell adhesion molecule b"/>
    <property type="match status" value="1"/>
</dbReference>
<dbReference type="FunFam" id="2.60.40.10:FF:000093">
    <property type="entry name" value="Down syndrome cell adhesion molecule, isoform B"/>
    <property type="match status" value="1"/>
</dbReference>
<dbReference type="FunFam" id="2.60.40.10:FF:000230">
    <property type="entry name" value="Down syndrome cell adhesion molecule, isoform D"/>
    <property type="match status" value="1"/>
</dbReference>
<dbReference type="FunFam" id="2.60.40.10:FF:000678">
    <property type="entry name" value="Down syndrome cell adhesion molecule-like protein Dscam2"/>
    <property type="match status" value="1"/>
</dbReference>
<dbReference type="FunFam" id="2.60.40.10:FF:001035">
    <property type="entry name" value="Down syndrome cell adhesion molecule-like protein Dscam2"/>
    <property type="match status" value="1"/>
</dbReference>
<dbReference type="FunFam" id="2.60.40.10:FF:001049">
    <property type="entry name" value="Down syndrome cell adhesion molecule-like protein Dscam2"/>
    <property type="match status" value="1"/>
</dbReference>
<dbReference type="FunFam" id="2.60.40.10:FF:001118">
    <property type="entry name" value="Down syndrome cell adhesion molecule-like protein Dscam2"/>
    <property type="match status" value="1"/>
</dbReference>
<dbReference type="FunFam" id="2.60.40.10:FF:001140">
    <property type="entry name" value="Down syndrome cell adhesion molecule-like protein Dscam2"/>
    <property type="match status" value="1"/>
</dbReference>
<dbReference type="FunFam" id="2.60.40.10:FF:001180">
    <property type="entry name" value="Down syndrome cell adhesion molecule-like protein Dscam2"/>
    <property type="match status" value="1"/>
</dbReference>
<dbReference type="FunFam" id="2.60.40.10:FF:001355">
    <property type="entry name" value="Down syndrome cell adhesion molecule-like protein Dscam2"/>
    <property type="match status" value="1"/>
</dbReference>
<dbReference type="FunFam" id="2.60.40.10:FF:001446">
    <property type="entry name" value="Down syndrome cell adhesion molecule-like protein Dscam2"/>
    <property type="match status" value="1"/>
</dbReference>
<dbReference type="FunFam" id="2.60.40.10:FF:001670">
    <property type="entry name" value="Down syndrome cell adhesion molecule-like protein Dscam2"/>
    <property type="match status" value="1"/>
</dbReference>
<dbReference type="Gene3D" id="2.60.40.10">
    <property type="entry name" value="Immunoglobulins"/>
    <property type="match status" value="16"/>
</dbReference>
<dbReference type="InterPro" id="IPR056754">
    <property type="entry name" value="DSCAM/DSCAML_C"/>
</dbReference>
<dbReference type="InterPro" id="IPR003961">
    <property type="entry name" value="FN3_dom"/>
</dbReference>
<dbReference type="InterPro" id="IPR036116">
    <property type="entry name" value="FN3_sf"/>
</dbReference>
<dbReference type="InterPro" id="IPR007110">
    <property type="entry name" value="Ig-like_dom"/>
</dbReference>
<dbReference type="InterPro" id="IPR036179">
    <property type="entry name" value="Ig-like_dom_sf"/>
</dbReference>
<dbReference type="InterPro" id="IPR013783">
    <property type="entry name" value="Ig-like_fold"/>
</dbReference>
<dbReference type="InterPro" id="IPR013098">
    <property type="entry name" value="Ig_I-set"/>
</dbReference>
<dbReference type="InterPro" id="IPR003599">
    <property type="entry name" value="Ig_sub"/>
</dbReference>
<dbReference type="InterPro" id="IPR003598">
    <property type="entry name" value="Ig_sub2"/>
</dbReference>
<dbReference type="PANTHER" id="PTHR10075">
    <property type="entry name" value="BASIGIN RELATED"/>
    <property type="match status" value="1"/>
</dbReference>
<dbReference type="PANTHER" id="PTHR10075:SF100">
    <property type="entry name" value="FASCICLIN-2"/>
    <property type="match status" value="1"/>
</dbReference>
<dbReference type="Pfam" id="PF00041">
    <property type="entry name" value="fn3"/>
    <property type="match status" value="5"/>
</dbReference>
<dbReference type="Pfam" id="PF25059">
    <property type="entry name" value="FN3_DSCAM-DSCAML_C"/>
    <property type="match status" value="1"/>
</dbReference>
<dbReference type="Pfam" id="PF07679">
    <property type="entry name" value="I-set"/>
    <property type="match status" value="4"/>
</dbReference>
<dbReference type="Pfam" id="PF13895">
    <property type="entry name" value="Ig_2"/>
    <property type="match status" value="1"/>
</dbReference>
<dbReference type="Pfam" id="PF13927">
    <property type="entry name" value="Ig_3"/>
    <property type="match status" value="3"/>
</dbReference>
<dbReference type="SMART" id="SM00060">
    <property type="entry name" value="FN3"/>
    <property type="match status" value="6"/>
</dbReference>
<dbReference type="SMART" id="SM00409">
    <property type="entry name" value="IG"/>
    <property type="match status" value="9"/>
</dbReference>
<dbReference type="SMART" id="SM00408">
    <property type="entry name" value="IGc2"/>
    <property type="match status" value="9"/>
</dbReference>
<dbReference type="SUPFAM" id="SSF49265">
    <property type="entry name" value="Fibronectin type III"/>
    <property type="match status" value="3"/>
</dbReference>
<dbReference type="SUPFAM" id="SSF48726">
    <property type="entry name" value="Immunoglobulin"/>
    <property type="match status" value="9"/>
</dbReference>
<dbReference type="PROSITE" id="PS50853">
    <property type="entry name" value="FN3"/>
    <property type="match status" value="6"/>
</dbReference>
<dbReference type="PROSITE" id="PS50835">
    <property type="entry name" value="IG_LIKE"/>
    <property type="match status" value="9"/>
</dbReference>
<sequence>MWISSRFFVILLLLNLDNTCSEPFEAHLRGPGFVMEPPGRVEFSNSSGGWLDCSASGSPQPTVDWVHADGSAVTEIHGVRRVLRNGTLVLMPFAAAAYHQDVHNTIYRCIASNSVGRIVSRDVQVRAVVAQAYKVDVEVLSAARGCTAILRCVVPTFVKELVRVVSWVHEPAIYIYPSLQGDGKFHLLPTGELLIHNLQESDESQSFRCRSMHRLTRQVVVSSPTRLRINSHRGIISPSVVEHTAHVQVSQDEGAVLLCVAQGCPSPEYSWFTHNGAGPLPVLSGPRVRLLGPILAIEAVTGEDSGVYKCTAGNVGGEASAELRLTVATPIQVEISPNVLSVHMGGTAEFRCLVTSNGSPVGMQNILWYKDGRQLPSSGRVEDTLVVPRVSRENRGMYQCVVRRPEGDTFQATAELQLGDAPPVLLYSFIEQTLQPGPAVSLKCSAAGNPTPQISWTLDGFPLPSNGRFMIGQYITVHGDVISHVNISHVMVEDGGEYACIAENRAGRVQHAARLNIYGLPYIRLIPKVTAVSGETLNLKCPVAGYPIEEIHWERGGRELPDDIRQRVQPDGSLTISPVQKNSDSGVYTCWARNKQGHSARRSGEVTVIVPPSIEPFAFQEGLAEGMRTRTVCGVSRGDPPLKLIWLKDGDPLPDLLGANVTMLDQYSSLLSIPSLSATHSGEYTCVAKNPAAEIKYTALLQVKVPPRWIVEPVDANVERNRHIMLHCQAQGVPTPSIVWKKATGSKSGEYEEVRERPFTKLLGNGSLLLQHVKEDREGFYLCQANNGIGTGIGKVIQLKVNSSPYFSSTSRSVMVKKGDTALLQCAVSGDKPINIVWMRSGKNTLNPSTNYKISVKQEATPDGVSAELQIRTVDATDSGPYFCRASNLYGNDQQLVQLQVQEPPLPPSVLEAAMISSRSVNIKWQPKTLGTGDVTKYIVEFREADPLFVDQWQQIEVKDPPHFNAMIENLKPATRYAFRVIAEGSAGRSAPSQELIVRTEPQRPAGPPLSLSARPLSSTELLISWVAPLPELRHGDIQGYNVGYKLSSSGNTAYNFTSVSGDGDGGNGELLLSGLAKFARYTVVVQAFNQVGPGPLSEPTAAQTMEDVPSRPPEDVRCAALSSQSLQVSWQPPPIYHTNGLLQGYKLIFEPIIDDIQPSKDEVESRKTTALTMVLTGLRKYTNYSIQVLAHTRMGDGVVSKPLFCHSEEDVPEAPADIKVVSSSSQSLYISWLPPNEPNGVITKYSLYTRVVNGREELNNEKRSLPSQQAYYEAKGLHPHMEYQFWVTASTRVGEGKSSRVSSQITTNRIPARIISFGGPVVRPWRSTVTLPCTAVGKPKREWFKSDVALRQGGLHNSQLLDSGDLIISSLQLADGGNYSCQVDNGIGTDRLTHTLIVQVPPTAPVLYVTSATSSSILMHWKCGFTGNAPITGYTLFYRRANGNTDEMQLSRHASSHELKGLMCGSTYQIHLSAQNKVGTSPTSTILHVRTQGQSPGHPASTALLAPNSTSLLVRLHSWPDNGCPLLYFVLQYRAVTDDPDAEWVLVSNALKPQRRIVINNLQPSTLYQLRMEAHNVAGISQAEFNFVTLTKDGDPPPPEIMHRGRSGQTTVIFANINLLIPTIAAVSGMFCTIIMIIVCYRHMLKNAPPLAEQSQIQKESLENRANSEAAQRERYYATIHKVSMQNNDKIPETSEDISPYATFQLSEAGGNMSQPHHGGPANTLLHSFMYHERALAEGCSSPPPAAVLNPPTTTTHHHHHHQRPLKTIHNYYQTSPFHNISKNRRRHSRKTEPESEESESDQDQLTSSRTESSNQHEGKIKHSIIYHGAQSSTSSDLSPMSEQKSLPRRGRSRYHHQQYQFSTNTTPRHHNSNKMNNNTTSNTNTTATNTTATPSTSSNSNKILSPRGGNLKSISSTFKSQDSIQCHIPTLVKSPSISTQQQKQFHKQQLQNSSTNNSQHSSSNPNSSSLKQQQPLLITPKLHQLEANGQELLGLDGIGNSPLVACMPPSSQFRPIPHKSIMPAHEPPHHHNHSQQSHPHQQQQQQQHPGTLLNPSTAMLSSKFFTAPTLPK</sequence>
<evidence type="ECO:0000250" key="1"/>
<evidence type="ECO:0000255" key="2"/>
<evidence type="ECO:0000255" key="3">
    <source>
        <dbReference type="PROSITE-ProRule" id="PRU00114"/>
    </source>
</evidence>
<evidence type="ECO:0000255" key="4">
    <source>
        <dbReference type="PROSITE-ProRule" id="PRU00316"/>
    </source>
</evidence>
<evidence type="ECO:0000256" key="5">
    <source>
        <dbReference type="SAM" id="MobiDB-lite"/>
    </source>
</evidence>
<evidence type="ECO:0000269" key="6">
    <source>
    </source>
</evidence>
<evidence type="ECO:0000269" key="7">
    <source>
    </source>
</evidence>
<evidence type="ECO:0000303" key="8">
    <source>
    </source>
</evidence>
<evidence type="ECO:0000305" key="9"/>
<evidence type="ECO:0000312" key="10">
    <source>
        <dbReference type="EMBL" id="AAF50601.3"/>
    </source>
</evidence>
<evidence type="ECO:0000312" key="11">
    <source>
        <dbReference type="EMBL" id="AAM48303.1"/>
    </source>
</evidence>
<comment type="function">
    <text evidence="1">Cell adhesion molecule.</text>
</comment>
<comment type="subcellular location">
    <subcellularLocation>
        <location>Membrane</location>
        <topology>Single-pass type I membrane protein</topology>
    </subcellularLocation>
</comment>
<comment type="alternative products">
    <event type="alternative splicing"/>
    <isoform>
        <id>Q9VS29-1</id>
        <name evidence="6">J</name>
        <sequence type="displayed"/>
    </isoform>
    <isoform>
        <id>Q9VS29-2</id>
        <name evidence="6">E</name>
        <sequence type="described" ref="VSP_053091 VSP_053092"/>
    </isoform>
    <isoform>
        <id>Q9VS29-3</id>
        <name evidence="6">F</name>
        <sequence type="described" ref="VSP_053094 VSP_053095"/>
    </isoform>
    <isoform>
        <id>Q9VS29-4</id>
        <name evidence="6">G</name>
        <sequence type="described" ref="VSP_053097 VSP_053098"/>
    </isoform>
    <isoform>
        <id>Q9VS29-5</id>
        <name evidence="6">H</name>
        <sequence type="described" ref="VSP_053097"/>
    </isoform>
    <isoform>
        <id>Q9VS29-6</id>
        <name evidence="6">I</name>
        <sequence type="described" ref="VSP_053093 VSP_053097 VSP_053098"/>
    </isoform>
    <isoform>
        <id>Q9VS29-7</id>
        <name evidence="6">K</name>
        <sequence type="described" ref="VSP_053096 VSP_053098"/>
    </isoform>
</comment>
<comment type="sequence caution" evidence="9">
    <conflict type="erroneous initiation">
        <sequence resource="EMBL-CDS" id="AAM48303"/>
    </conflict>
    <text>Extended N-terminus.</text>
</comment>
<comment type="sequence caution" evidence="9">
    <conflict type="miscellaneous discrepancy">
        <sequence resource="EMBL-CDS" id="AAM48303"/>
    </conflict>
    <text>Contaminating sequence. Potential poly-A sequence.</text>
</comment>
<feature type="signal peptide" evidence="2">
    <location>
        <begin position="1"/>
        <end position="21"/>
    </location>
</feature>
<feature type="chain" id="PRO_0000376054" description="Cell adhesion molecule Dscam2">
    <location>
        <begin position="22"/>
        <end position="2074"/>
    </location>
</feature>
<feature type="topological domain" description="Extracellular" evidence="2">
    <location>
        <begin position="22"/>
        <end position="1619"/>
    </location>
</feature>
<feature type="transmembrane region" description="Helical" evidence="2">
    <location>
        <begin position="1620"/>
        <end position="1640"/>
    </location>
</feature>
<feature type="topological domain" description="Cytoplasmic" evidence="2">
    <location>
        <begin position="1641"/>
        <end position="2074"/>
    </location>
</feature>
<feature type="domain" description="Ig-like C2-type 1" evidence="2">
    <location>
        <begin position="31"/>
        <end position="120"/>
    </location>
</feature>
<feature type="domain" description="Ig-like C2-type 2" evidence="2">
    <location>
        <begin position="238"/>
        <end position="326"/>
    </location>
</feature>
<feature type="domain" description="Ig-like C2-type 3" evidence="2">
    <location>
        <begin position="330"/>
        <end position="417"/>
    </location>
</feature>
<feature type="domain" description="Ig-like C2-type 4" evidence="2">
    <location>
        <begin position="422"/>
        <end position="516"/>
    </location>
</feature>
<feature type="domain" description="Ig-like C2-type 5" evidence="2">
    <location>
        <begin position="521"/>
        <end position="607"/>
    </location>
</feature>
<feature type="domain" description="Ig-like C2-type 6" evidence="2">
    <location>
        <begin position="612"/>
        <end position="698"/>
    </location>
</feature>
<feature type="domain" description="Ig-like C2-type 7" evidence="2">
    <location>
        <begin position="707"/>
        <end position="802"/>
    </location>
</feature>
<feature type="domain" description="Ig-like C2-type 8" evidence="2">
    <location>
        <begin position="805"/>
        <end position="902"/>
    </location>
</feature>
<feature type="domain" description="Fibronectin type-III 1" evidence="4">
    <location>
        <begin position="907"/>
        <end position="1003"/>
    </location>
</feature>
<feature type="domain" description="Fibronectin type-III 2" evidence="4">
    <location>
        <begin position="1008"/>
        <end position="1108"/>
    </location>
</feature>
<feature type="domain" description="Fibronectin type-III 3" evidence="4">
    <location>
        <begin position="1113"/>
        <end position="1211"/>
    </location>
</feature>
<feature type="domain" description="Fibronectin type-III 4" evidence="4">
    <location>
        <begin position="1215"/>
        <end position="1311"/>
    </location>
</feature>
<feature type="domain" description="Ig-like C2-type 9" evidence="2">
    <location>
        <begin position="1312"/>
        <end position="1400"/>
    </location>
</feature>
<feature type="domain" description="Fibronectin type-III 5" evidence="4">
    <location>
        <begin position="1402"/>
        <end position="1495"/>
    </location>
</feature>
<feature type="domain" description="Fibronectin type-III 6" evidence="4">
    <location>
        <begin position="1496"/>
        <end position="1595"/>
    </location>
</feature>
<feature type="region of interest" description="Disordered" evidence="5">
    <location>
        <begin position="1739"/>
        <end position="1766"/>
    </location>
</feature>
<feature type="region of interest" description="Disordered" evidence="5">
    <location>
        <begin position="1778"/>
        <end position="1917"/>
    </location>
</feature>
<feature type="region of interest" description="Disordered" evidence="5">
    <location>
        <begin position="1936"/>
        <end position="1974"/>
    </location>
</feature>
<feature type="region of interest" description="Disordered" evidence="5">
    <location>
        <begin position="2011"/>
        <end position="2074"/>
    </location>
</feature>
<feature type="compositionally biased region" description="Basic residues" evidence="5">
    <location>
        <begin position="1757"/>
        <end position="1766"/>
    </location>
</feature>
<feature type="compositionally biased region" description="Polar residues" evidence="5">
    <location>
        <begin position="1831"/>
        <end position="1846"/>
    </location>
</feature>
<feature type="compositionally biased region" description="Basic residues" evidence="5">
    <location>
        <begin position="1848"/>
        <end position="1858"/>
    </location>
</feature>
<feature type="compositionally biased region" description="Polar residues" evidence="5">
    <location>
        <begin position="1859"/>
        <end position="1868"/>
    </location>
</feature>
<feature type="compositionally biased region" description="Low complexity" evidence="5">
    <location>
        <begin position="1875"/>
        <end position="1903"/>
    </location>
</feature>
<feature type="compositionally biased region" description="Low complexity" evidence="5">
    <location>
        <begin position="1942"/>
        <end position="1974"/>
    </location>
</feature>
<feature type="compositionally biased region" description="Low complexity" evidence="5">
    <location>
        <begin position="2036"/>
        <end position="2051"/>
    </location>
</feature>
<feature type="compositionally biased region" description="Polar residues" evidence="5">
    <location>
        <begin position="2055"/>
        <end position="2066"/>
    </location>
</feature>
<feature type="disulfide bond" evidence="3">
    <location>
        <begin position="53"/>
        <end position="109"/>
    </location>
</feature>
<feature type="disulfide bond" evidence="3">
    <location>
        <begin position="259"/>
        <end position="310"/>
    </location>
</feature>
<feature type="disulfide bond" evidence="3">
    <location>
        <begin position="352"/>
        <end position="400"/>
    </location>
</feature>
<feature type="disulfide bond" evidence="3">
    <location>
        <begin position="444"/>
        <end position="500"/>
    </location>
</feature>
<feature type="disulfide bond" evidence="3">
    <location>
        <begin position="541"/>
        <end position="590"/>
    </location>
</feature>
<feature type="disulfide bond" evidence="3">
    <location>
        <begin position="633"/>
        <end position="686"/>
    </location>
</feature>
<feature type="disulfide bond" evidence="3">
    <location>
        <begin position="728"/>
        <end position="783"/>
    </location>
</feature>
<feature type="disulfide bond" evidence="3">
    <location>
        <begin position="826"/>
        <end position="884"/>
    </location>
</feature>
<feature type="disulfide bond" evidence="3">
    <location>
        <begin position="1334"/>
        <end position="1382"/>
    </location>
</feature>
<feature type="splice variant" id="VSP_053091" description="In isoform E." evidence="8">
    <original>LPYIRLIPKVTAVSGETLNLKCPV</original>
    <variation>TLYSHTHGMHSKHTDAHMRKMLMA</variation>
    <location>
        <begin position="520"/>
        <end position="543"/>
    </location>
</feature>
<feature type="splice variant" id="VSP_053092" description="In isoform E." evidence="8">
    <location>
        <begin position="544"/>
        <end position="2074"/>
    </location>
</feature>
<feature type="splice variant" id="VSP_053093" description="In isoform I." evidence="8">
    <original>SIEPFAFQEGLAEGMRTRTVCGVSRGDPPLKLIWLKDGDPLPDLLGANVTMLDQYSSLLSIPSLSATHSGEYTCVAKNPAAEIKYTALLQVK</original>
    <variation>KLSPFQTNILQLNMGDRASLTCSVVKGDLPLTINWRKDGRPIDPTQHMSVKQVDQYNSILVIENLGSDHTGNYSCVVRNSAAEVENSQALLVN</variation>
    <location>
        <begin position="613"/>
        <end position="704"/>
    </location>
</feature>
<feature type="splice variant" id="VSP_053094" description="In isoform F." evidence="8">
    <original>VPPRWIVEPVDANVERNRHIMLHCQAQGVPTPSIVWKKATGSKSGEYE</original>
    <variation>GSVLAYPSQKLNTEHKKRKPHKYRSHLLSKLKLSQCSLTLAASLKPFI</variation>
    <location>
        <begin position="705"/>
        <end position="752"/>
    </location>
</feature>
<feature type="splice variant" id="VSP_053095" description="In isoform F." evidence="8">
    <location>
        <begin position="753"/>
        <end position="2074"/>
    </location>
</feature>
<feature type="splice variant" id="VSP_053096" description="In isoform K." evidence="8">
    <original>MLKNAPPLAE</original>
    <variation>K</variation>
    <location>
        <begin position="1645"/>
        <end position="1654"/>
    </location>
</feature>
<feature type="splice variant" id="VSP_053097" description="In isoform G, isoform H and isoform I." evidence="8">
    <location>
        <begin position="1749"/>
        <end position="1782"/>
    </location>
</feature>
<feature type="splice variant" id="VSP_053098" description="In isoform G, isoform I and isoform K." evidence="8">
    <original>SIIYHGAQSSTSSDLSPMSEQKSLPRRGRSRYHHQQYQFSTNTTPRHHNSNKMNNNTTSNTNTTATNTTATPSTSSNSNKILSPRGGNLKSISSTFKSQDSIQCHIPTLVKSPSISTQQQKQFHKQQLQNSSTNNSQHSSSNPNSSSLKQQQPLLITPKLHQLEANGQELLGLDGIGNSPLVACMPPSSQFRPIPHKSIMPAHEPPHHHNHSQQSHPHQQQQQQQHPGTLLNPSTAMLSSKFFTAPTLPK</original>
    <variation>NSRLIQHFPNHNISITYL</variation>
    <location>
        <begin position="1825"/>
        <end position="2074"/>
    </location>
</feature>
<feature type="sequence conflict" description="In Ref. 3; AAM48303." evidence="9" ref="3">
    <original>V</original>
    <variation>I</variation>
    <location>
        <position position="1640"/>
    </location>
</feature>
<feature type="sequence conflict" description="In Ref. 3; AAM48303." evidence="9" ref="3">
    <original>T</original>
    <variation>A</variation>
    <location>
        <position position="1755"/>
    </location>
</feature>
<protein>
    <recommendedName>
        <fullName evidence="9">Cell adhesion molecule Dscam2</fullName>
    </recommendedName>
    <alternativeName>
        <fullName>Down syndrome cell adhesion molecule-like protein Dscam2</fullName>
    </alternativeName>
</protein>
<name>DSCL_DROME</name>
<keyword id="KW-0025">Alternative splicing</keyword>
<keyword id="KW-0130">Cell adhesion</keyword>
<keyword id="KW-1015">Disulfide bond</keyword>
<keyword id="KW-0393">Immunoglobulin domain</keyword>
<keyword id="KW-0472">Membrane</keyword>
<keyword id="KW-1185">Reference proteome</keyword>
<keyword id="KW-0677">Repeat</keyword>
<keyword id="KW-0732">Signal</keyword>
<keyword id="KW-0812">Transmembrane</keyword>
<keyword id="KW-1133">Transmembrane helix</keyword>
<reference evidence="10" key="1">
    <citation type="journal article" date="2000" name="Science">
        <title>The genome sequence of Drosophila melanogaster.</title>
        <authorList>
            <person name="Adams M.D."/>
            <person name="Celniker S.E."/>
            <person name="Holt R.A."/>
            <person name="Evans C.A."/>
            <person name="Gocayne J.D."/>
            <person name="Amanatides P.G."/>
            <person name="Scherer S.E."/>
            <person name="Li P.W."/>
            <person name="Hoskins R.A."/>
            <person name="Galle R.F."/>
            <person name="George R.A."/>
            <person name="Lewis S.E."/>
            <person name="Richards S."/>
            <person name="Ashburner M."/>
            <person name="Henderson S.N."/>
            <person name="Sutton G.G."/>
            <person name="Wortman J.R."/>
            <person name="Yandell M.D."/>
            <person name="Zhang Q."/>
            <person name="Chen L.X."/>
            <person name="Brandon R.C."/>
            <person name="Rogers Y.-H.C."/>
            <person name="Blazej R.G."/>
            <person name="Champe M."/>
            <person name="Pfeiffer B.D."/>
            <person name="Wan K.H."/>
            <person name="Doyle C."/>
            <person name="Baxter E.G."/>
            <person name="Helt G."/>
            <person name="Nelson C.R."/>
            <person name="Miklos G.L.G."/>
            <person name="Abril J.F."/>
            <person name="Agbayani A."/>
            <person name="An H.-J."/>
            <person name="Andrews-Pfannkoch C."/>
            <person name="Baldwin D."/>
            <person name="Ballew R.M."/>
            <person name="Basu A."/>
            <person name="Baxendale J."/>
            <person name="Bayraktaroglu L."/>
            <person name="Beasley E.M."/>
            <person name="Beeson K.Y."/>
            <person name="Benos P.V."/>
            <person name="Berman B.P."/>
            <person name="Bhandari D."/>
            <person name="Bolshakov S."/>
            <person name="Borkova D."/>
            <person name="Botchan M.R."/>
            <person name="Bouck J."/>
            <person name="Brokstein P."/>
            <person name="Brottier P."/>
            <person name="Burtis K.C."/>
            <person name="Busam D.A."/>
            <person name="Butler H."/>
            <person name="Cadieu E."/>
            <person name="Center A."/>
            <person name="Chandra I."/>
            <person name="Cherry J.M."/>
            <person name="Cawley S."/>
            <person name="Dahlke C."/>
            <person name="Davenport L.B."/>
            <person name="Davies P."/>
            <person name="de Pablos B."/>
            <person name="Delcher A."/>
            <person name="Deng Z."/>
            <person name="Mays A.D."/>
            <person name="Dew I."/>
            <person name="Dietz S.M."/>
            <person name="Dodson K."/>
            <person name="Doup L.E."/>
            <person name="Downes M."/>
            <person name="Dugan-Rocha S."/>
            <person name="Dunkov B.C."/>
            <person name="Dunn P."/>
            <person name="Durbin K.J."/>
            <person name="Evangelista C.C."/>
            <person name="Ferraz C."/>
            <person name="Ferriera S."/>
            <person name="Fleischmann W."/>
            <person name="Fosler C."/>
            <person name="Gabrielian A.E."/>
            <person name="Garg N.S."/>
            <person name="Gelbart W.M."/>
            <person name="Glasser K."/>
            <person name="Glodek A."/>
            <person name="Gong F."/>
            <person name="Gorrell J.H."/>
            <person name="Gu Z."/>
            <person name="Guan P."/>
            <person name="Harris M."/>
            <person name="Harris N.L."/>
            <person name="Harvey D.A."/>
            <person name="Heiman T.J."/>
            <person name="Hernandez J.R."/>
            <person name="Houck J."/>
            <person name="Hostin D."/>
            <person name="Houston K.A."/>
            <person name="Howland T.J."/>
            <person name="Wei M.-H."/>
            <person name="Ibegwam C."/>
            <person name="Jalali M."/>
            <person name="Kalush F."/>
            <person name="Karpen G.H."/>
            <person name="Ke Z."/>
            <person name="Kennison J.A."/>
            <person name="Ketchum K.A."/>
            <person name="Kimmel B.E."/>
            <person name="Kodira C.D."/>
            <person name="Kraft C.L."/>
            <person name="Kravitz S."/>
            <person name="Kulp D."/>
            <person name="Lai Z."/>
            <person name="Lasko P."/>
            <person name="Lei Y."/>
            <person name="Levitsky A.A."/>
            <person name="Li J.H."/>
            <person name="Li Z."/>
            <person name="Liang Y."/>
            <person name="Lin X."/>
            <person name="Liu X."/>
            <person name="Mattei B."/>
            <person name="McIntosh T.C."/>
            <person name="McLeod M.P."/>
            <person name="McPherson D."/>
            <person name="Merkulov G."/>
            <person name="Milshina N.V."/>
            <person name="Mobarry C."/>
            <person name="Morris J."/>
            <person name="Moshrefi A."/>
            <person name="Mount S.M."/>
            <person name="Moy M."/>
            <person name="Murphy B."/>
            <person name="Murphy L."/>
            <person name="Muzny D.M."/>
            <person name="Nelson D.L."/>
            <person name="Nelson D.R."/>
            <person name="Nelson K.A."/>
            <person name="Nixon K."/>
            <person name="Nusskern D.R."/>
            <person name="Pacleb J.M."/>
            <person name="Palazzolo M."/>
            <person name="Pittman G.S."/>
            <person name="Pan S."/>
            <person name="Pollard J."/>
            <person name="Puri V."/>
            <person name="Reese M.G."/>
            <person name="Reinert K."/>
            <person name="Remington K."/>
            <person name="Saunders R.D.C."/>
            <person name="Scheeler F."/>
            <person name="Shen H."/>
            <person name="Shue B.C."/>
            <person name="Siden-Kiamos I."/>
            <person name="Simpson M."/>
            <person name="Skupski M.P."/>
            <person name="Smith T.J."/>
            <person name="Spier E."/>
            <person name="Spradling A.C."/>
            <person name="Stapleton M."/>
            <person name="Strong R."/>
            <person name="Sun E."/>
            <person name="Svirskas R."/>
            <person name="Tector C."/>
            <person name="Turner R."/>
            <person name="Venter E."/>
            <person name="Wang A.H."/>
            <person name="Wang X."/>
            <person name="Wang Z.-Y."/>
            <person name="Wassarman D.A."/>
            <person name="Weinstock G.M."/>
            <person name="Weissenbach J."/>
            <person name="Williams S.M."/>
            <person name="Woodage T."/>
            <person name="Worley K.C."/>
            <person name="Wu D."/>
            <person name="Yang S."/>
            <person name="Yao Q.A."/>
            <person name="Ye J."/>
            <person name="Yeh R.-F."/>
            <person name="Zaveri J.S."/>
            <person name="Zhan M."/>
            <person name="Zhang G."/>
            <person name="Zhao Q."/>
            <person name="Zheng L."/>
            <person name="Zheng X.H."/>
            <person name="Zhong F.N."/>
            <person name="Zhong W."/>
            <person name="Zhou X."/>
            <person name="Zhu S.C."/>
            <person name="Zhu X."/>
            <person name="Smith H.O."/>
            <person name="Gibbs R.A."/>
            <person name="Myers E.W."/>
            <person name="Rubin G.M."/>
            <person name="Venter J.C."/>
        </authorList>
    </citation>
    <scope>NUCLEOTIDE SEQUENCE [LARGE SCALE GENOMIC DNA]</scope>
    <source>
        <strain>Berkeley</strain>
    </source>
</reference>
<reference evidence="9 10" key="2">
    <citation type="journal article" date="2002" name="Genome Biol.">
        <title>Annotation of the Drosophila melanogaster euchromatic genome: a systematic review.</title>
        <authorList>
            <person name="Misra S."/>
            <person name="Crosby M.A."/>
            <person name="Mungall C.J."/>
            <person name="Matthews B.B."/>
            <person name="Campbell K.S."/>
            <person name="Hradecky P."/>
            <person name="Huang Y."/>
            <person name="Kaminker J.S."/>
            <person name="Millburn G.H."/>
            <person name="Prochnik S.E."/>
            <person name="Smith C.D."/>
            <person name="Tupy J.L."/>
            <person name="Whitfield E.J."/>
            <person name="Bayraktaroglu L."/>
            <person name="Berman B.P."/>
            <person name="Bettencourt B.R."/>
            <person name="Celniker S.E."/>
            <person name="de Grey A.D.N.J."/>
            <person name="Drysdale R.A."/>
            <person name="Harris N.L."/>
            <person name="Richter J."/>
            <person name="Russo S."/>
            <person name="Schroeder A.J."/>
            <person name="Shu S.Q."/>
            <person name="Stapleton M."/>
            <person name="Yamada C."/>
            <person name="Ashburner M."/>
            <person name="Gelbart W.M."/>
            <person name="Rubin G.M."/>
            <person name="Lewis S.E."/>
        </authorList>
    </citation>
    <scope>GENOME REANNOTATION</scope>
    <scope>ALTERNATIVE SPLICING</scope>
    <source>
        <strain>Berkeley</strain>
    </source>
</reference>
<reference evidence="9 11" key="3">
    <citation type="journal article" date="2002" name="Genome Biol.">
        <title>A Drosophila full-length cDNA resource.</title>
        <authorList>
            <person name="Stapleton M."/>
            <person name="Carlson J.W."/>
            <person name="Brokstein P."/>
            <person name="Yu C."/>
            <person name="Champe M."/>
            <person name="George R.A."/>
            <person name="Guarin H."/>
            <person name="Kronmiller B."/>
            <person name="Pacleb J.M."/>
            <person name="Park S."/>
            <person name="Wan K.H."/>
            <person name="Rubin G.M."/>
            <person name="Celniker S.E."/>
        </authorList>
    </citation>
    <scope>NUCLEOTIDE SEQUENCE [LARGE SCALE MRNA] OF 317-1780 (ISOFORM J)</scope>
    <source>
        <strain evidence="7">Berkeley</strain>
        <tissue evidence="7">Testis</tissue>
    </source>
</reference>
<reference evidence="9" key="4">
    <citation type="journal article" date="2003" name="Development">
        <title>The immunoglobulin superfamily in Drosophila melanogaster and Caenorhabditis elegans and the evolution of complexity.</title>
        <authorList>
            <person name="Vogel C."/>
            <person name="Teichmann S.A."/>
            <person name="Chothia C."/>
        </authorList>
    </citation>
    <scope>IDENTIFICATION</scope>
</reference>
<accession>Q9VS29</accession>
<accession>B7Z0C6</accession>
<accession>B7Z0C7</accession>
<accession>B7Z0C8</accession>
<accession>Q0E8H6</accession>
<accession>Q8MTB2</accession>
<accession>Q9VS28</accession>
<accession>Q9VS30</accession>
<proteinExistence type="evidence at transcript level"/>